<sequence length="142" mass="14965">MAKKIQAIVKLQVSAGMANPSPPVGPALGQQGVNIMEFCKAFNAKTEPLEKGLPIPVVITVYADRSFTFETKTVPAAVLLLKAAGVKSGSPKPNTNKIGKVTKTQVREIAETKQADMTGTSIDANIQSILGTARSMGLEVEE</sequence>
<organism>
    <name type="scientific">Hamiltonella defensa subsp. Acyrthosiphon pisum (strain 5AT)</name>
    <dbReference type="NCBI Taxonomy" id="572265"/>
    <lineage>
        <taxon>Bacteria</taxon>
        <taxon>Pseudomonadati</taxon>
        <taxon>Pseudomonadota</taxon>
        <taxon>Gammaproteobacteria</taxon>
        <taxon>Enterobacterales</taxon>
        <taxon>Enterobacteriaceae</taxon>
        <taxon>aphid secondary symbionts</taxon>
        <taxon>Candidatus Hamiltonella</taxon>
    </lineage>
</organism>
<dbReference type="EMBL" id="CP001277">
    <property type="protein sequence ID" value="ACQ67448.1"/>
    <property type="molecule type" value="Genomic_DNA"/>
</dbReference>
<dbReference type="RefSeq" id="WP_015873269.1">
    <property type="nucleotide sequence ID" value="NC_012751.1"/>
</dbReference>
<dbReference type="SMR" id="C4K4F5"/>
<dbReference type="STRING" id="572265.HDEF_0715"/>
<dbReference type="GeneID" id="66260568"/>
<dbReference type="KEGG" id="hde:HDEF_0715"/>
<dbReference type="eggNOG" id="COG0080">
    <property type="taxonomic scope" value="Bacteria"/>
</dbReference>
<dbReference type="HOGENOM" id="CLU_074237_2_0_6"/>
<dbReference type="Proteomes" id="UP000002334">
    <property type="component" value="Chromosome"/>
</dbReference>
<dbReference type="GO" id="GO:0022625">
    <property type="term" value="C:cytosolic large ribosomal subunit"/>
    <property type="evidence" value="ECO:0007669"/>
    <property type="project" value="TreeGrafter"/>
</dbReference>
<dbReference type="GO" id="GO:0070180">
    <property type="term" value="F:large ribosomal subunit rRNA binding"/>
    <property type="evidence" value="ECO:0007669"/>
    <property type="project" value="UniProtKB-UniRule"/>
</dbReference>
<dbReference type="GO" id="GO:0003735">
    <property type="term" value="F:structural constituent of ribosome"/>
    <property type="evidence" value="ECO:0007669"/>
    <property type="project" value="InterPro"/>
</dbReference>
<dbReference type="GO" id="GO:0006412">
    <property type="term" value="P:translation"/>
    <property type="evidence" value="ECO:0007669"/>
    <property type="project" value="UniProtKB-UniRule"/>
</dbReference>
<dbReference type="CDD" id="cd00349">
    <property type="entry name" value="Ribosomal_L11"/>
    <property type="match status" value="1"/>
</dbReference>
<dbReference type="FunFam" id="1.10.10.250:FF:000001">
    <property type="entry name" value="50S ribosomal protein L11"/>
    <property type="match status" value="1"/>
</dbReference>
<dbReference type="FunFam" id="3.30.1550.10:FF:000001">
    <property type="entry name" value="50S ribosomal protein L11"/>
    <property type="match status" value="1"/>
</dbReference>
<dbReference type="Gene3D" id="1.10.10.250">
    <property type="entry name" value="Ribosomal protein L11, C-terminal domain"/>
    <property type="match status" value="1"/>
</dbReference>
<dbReference type="Gene3D" id="3.30.1550.10">
    <property type="entry name" value="Ribosomal protein L11/L12, N-terminal domain"/>
    <property type="match status" value="1"/>
</dbReference>
<dbReference type="HAMAP" id="MF_00736">
    <property type="entry name" value="Ribosomal_uL11"/>
    <property type="match status" value="1"/>
</dbReference>
<dbReference type="InterPro" id="IPR000911">
    <property type="entry name" value="Ribosomal_uL11"/>
</dbReference>
<dbReference type="InterPro" id="IPR006519">
    <property type="entry name" value="Ribosomal_uL11_bac-typ"/>
</dbReference>
<dbReference type="InterPro" id="IPR020783">
    <property type="entry name" value="Ribosomal_uL11_C"/>
</dbReference>
<dbReference type="InterPro" id="IPR036769">
    <property type="entry name" value="Ribosomal_uL11_C_sf"/>
</dbReference>
<dbReference type="InterPro" id="IPR020784">
    <property type="entry name" value="Ribosomal_uL11_N"/>
</dbReference>
<dbReference type="InterPro" id="IPR036796">
    <property type="entry name" value="Ribosomal_uL11_N_sf"/>
</dbReference>
<dbReference type="NCBIfam" id="TIGR01632">
    <property type="entry name" value="L11_bact"/>
    <property type="match status" value="1"/>
</dbReference>
<dbReference type="PANTHER" id="PTHR11661">
    <property type="entry name" value="60S RIBOSOMAL PROTEIN L12"/>
    <property type="match status" value="1"/>
</dbReference>
<dbReference type="PANTHER" id="PTHR11661:SF1">
    <property type="entry name" value="LARGE RIBOSOMAL SUBUNIT PROTEIN UL11M"/>
    <property type="match status" value="1"/>
</dbReference>
<dbReference type="Pfam" id="PF00298">
    <property type="entry name" value="Ribosomal_L11"/>
    <property type="match status" value="1"/>
</dbReference>
<dbReference type="Pfam" id="PF03946">
    <property type="entry name" value="Ribosomal_L11_N"/>
    <property type="match status" value="1"/>
</dbReference>
<dbReference type="SMART" id="SM00649">
    <property type="entry name" value="RL11"/>
    <property type="match status" value="1"/>
</dbReference>
<dbReference type="SUPFAM" id="SSF54747">
    <property type="entry name" value="Ribosomal L11/L12e N-terminal domain"/>
    <property type="match status" value="1"/>
</dbReference>
<dbReference type="SUPFAM" id="SSF46906">
    <property type="entry name" value="Ribosomal protein L11, C-terminal domain"/>
    <property type="match status" value="1"/>
</dbReference>
<reference key="1">
    <citation type="journal article" date="2009" name="Proc. Natl. Acad. Sci. U.S.A.">
        <title>Hamiltonella defensa, genome evolution of protective bacterial endosymbiont from pathogenic ancestors.</title>
        <authorList>
            <person name="Degnan P.H."/>
            <person name="Yu Y."/>
            <person name="Sisneros N."/>
            <person name="Wing R.A."/>
            <person name="Moran N.A."/>
        </authorList>
    </citation>
    <scope>NUCLEOTIDE SEQUENCE [LARGE SCALE GENOMIC DNA]</scope>
    <source>
        <strain>5AT</strain>
    </source>
</reference>
<evidence type="ECO:0000255" key="1">
    <source>
        <dbReference type="HAMAP-Rule" id="MF_00736"/>
    </source>
</evidence>
<evidence type="ECO:0000305" key="2"/>
<gene>
    <name evidence="1" type="primary">rplK</name>
    <name type="ordered locus">HDEF_0715</name>
</gene>
<feature type="chain" id="PRO_1000212778" description="Large ribosomal subunit protein uL11">
    <location>
        <begin position="1"/>
        <end position="142"/>
    </location>
</feature>
<accession>C4K4F5</accession>
<name>RL11_HAMD5</name>
<proteinExistence type="inferred from homology"/>
<comment type="function">
    <text evidence="1">Forms part of the ribosomal stalk which helps the ribosome interact with GTP-bound translation factors.</text>
</comment>
<comment type="subunit">
    <text evidence="1">Part of the ribosomal stalk of the 50S ribosomal subunit. Interacts with L10 and the large rRNA to form the base of the stalk. L10 forms an elongated spine to which L12 dimers bind in a sequential fashion forming a multimeric L10(L12)X complex.</text>
</comment>
<comment type="PTM">
    <text evidence="1">One or more lysine residues are methylated.</text>
</comment>
<comment type="similarity">
    <text evidence="1">Belongs to the universal ribosomal protein uL11 family.</text>
</comment>
<protein>
    <recommendedName>
        <fullName evidence="1">Large ribosomal subunit protein uL11</fullName>
    </recommendedName>
    <alternativeName>
        <fullName evidence="2">50S ribosomal protein L11</fullName>
    </alternativeName>
</protein>
<keyword id="KW-0488">Methylation</keyword>
<keyword id="KW-0687">Ribonucleoprotein</keyword>
<keyword id="KW-0689">Ribosomal protein</keyword>
<keyword id="KW-0694">RNA-binding</keyword>
<keyword id="KW-0699">rRNA-binding</keyword>